<protein>
    <recommendedName>
        <fullName evidence="1">Holo-[acyl-carrier-protein] synthase</fullName>
        <shortName evidence="1">Holo-ACP synthase</shortName>
        <ecNumber evidence="1">2.7.8.7</ecNumber>
    </recommendedName>
    <alternativeName>
        <fullName evidence="1">4'-phosphopantetheinyl transferase AcpS</fullName>
    </alternativeName>
</protein>
<name>ACPS_BARBK</name>
<sequence length="133" mass="15052">MIIGLGNDMIDIRRIEKILIRHSSRFIQRIFTDIEQNKSENFPKRSYAYAKRFAAKEACAKALGTGIAYGVNWRDIGIVNSPSGKPTIKLTNHAQIQLEKLLPSNHDAFIHLSMTDDFPWAQAFVIIEALPRG</sequence>
<dbReference type="EC" id="2.7.8.7" evidence="1"/>
<dbReference type="EMBL" id="CP000524">
    <property type="protein sequence ID" value="ABM45412.1"/>
    <property type="molecule type" value="Genomic_DNA"/>
</dbReference>
<dbReference type="RefSeq" id="WP_005766541.1">
    <property type="nucleotide sequence ID" value="NC_008783.1"/>
</dbReference>
<dbReference type="SMR" id="A1US34"/>
<dbReference type="STRING" id="360095.BARBAKC583_0471"/>
<dbReference type="GeneID" id="4684949"/>
<dbReference type="KEGG" id="bbk:BARBAKC583_0471"/>
<dbReference type="PATRIC" id="fig|360095.6.peg.453"/>
<dbReference type="eggNOG" id="COG0736">
    <property type="taxonomic scope" value="Bacteria"/>
</dbReference>
<dbReference type="HOGENOM" id="CLU_089696_0_2_5"/>
<dbReference type="OrthoDB" id="517356at2"/>
<dbReference type="Proteomes" id="UP000000643">
    <property type="component" value="Chromosome"/>
</dbReference>
<dbReference type="GO" id="GO:0005737">
    <property type="term" value="C:cytoplasm"/>
    <property type="evidence" value="ECO:0007669"/>
    <property type="project" value="UniProtKB-SubCell"/>
</dbReference>
<dbReference type="GO" id="GO:0008897">
    <property type="term" value="F:holo-[acyl-carrier-protein] synthase activity"/>
    <property type="evidence" value="ECO:0007669"/>
    <property type="project" value="UniProtKB-UniRule"/>
</dbReference>
<dbReference type="GO" id="GO:0000287">
    <property type="term" value="F:magnesium ion binding"/>
    <property type="evidence" value="ECO:0007669"/>
    <property type="project" value="UniProtKB-UniRule"/>
</dbReference>
<dbReference type="GO" id="GO:0006633">
    <property type="term" value="P:fatty acid biosynthetic process"/>
    <property type="evidence" value="ECO:0007669"/>
    <property type="project" value="UniProtKB-UniRule"/>
</dbReference>
<dbReference type="Gene3D" id="3.90.470.20">
    <property type="entry name" value="4'-phosphopantetheinyl transferase domain"/>
    <property type="match status" value="1"/>
</dbReference>
<dbReference type="HAMAP" id="MF_00101">
    <property type="entry name" value="AcpS"/>
    <property type="match status" value="1"/>
</dbReference>
<dbReference type="InterPro" id="IPR008278">
    <property type="entry name" value="4-PPantetheinyl_Trfase_dom"/>
</dbReference>
<dbReference type="InterPro" id="IPR037143">
    <property type="entry name" value="4-PPantetheinyl_Trfase_dom_sf"/>
</dbReference>
<dbReference type="InterPro" id="IPR002582">
    <property type="entry name" value="ACPS"/>
</dbReference>
<dbReference type="InterPro" id="IPR004568">
    <property type="entry name" value="Ppantetheine-prot_Trfase_dom"/>
</dbReference>
<dbReference type="NCBIfam" id="TIGR00516">
    <property type="entry name" value="acpS"/>
    <property type="match status" value="1"/>
</dbReference>
<dbReference type="NCBIfam" id="TIGR00556">
    <property type="entry name" value="pantethn_trn"/>
    <property type="match status" value="1"/>
</dbReference>
<dbReference type="Pfam" id="PF01648">
    <property type="entry name" value="ACPS"/>
    <property type="match status" value="1"/>
</dbReference>
<dbReference type="SUPFAM" id="SSF56214">
    <property type="entry name" value="4'-phosphopantetheinyl transferase"/>
    <property type="match status" value="1"/>
</dbReference>
<accession>A1US34</accession>
<proteinExistence type="inferred from homology"/>
<organism>
    <name type="scientific">Bartonella bacilliformis (strain ATCC 35685 / KC583 / Herrer 020/F12,63)</name>
    <dbReference type="NCBI Taxonomy" id="360095"/>
    <lineage>
        <taxon>Bacteria</taxon>
        <taxon>Pseudomonadati</taxon>
        <taxon>Pseudomonadota</taxon>
        <taxon>Alphaproteobacteria</taxon>
        <taxon>Hyphomicrobiales</taxon>
        <taxon>Bartonellaceae</taxon>
        <taxon>Bartonella</taxon>
    </lineage>
</organism>
<reference key="1">
    <citation type="submission" date="2006-12" db="EMBL/GenBank/DDBJ databases">
        <authorList>
            <person name="Hendrix L."/>
            <person name="Mohamoud Y."/>
            <person name="Radune D."/>
            <person name="Shvartsbeyn A."/>
            <person name="Daugherty S."/>
            <person name="Dodson R."/>
            <person name="Durkin A.S."/>
            <person name="Harkins D."/>
            <person name="Huot H."/>
            <person name="Kothari S.P."/>
            <person name="Madupu R."/>
            <person name="Li J."/>
            <person name="Nelson W.C."/>
            <person name="Shrivastava S."/>
            <person name="Giglio M.G."/>
            <person name="Haft D."/>
            <person name="Selengut J."/>
            <person name="Fraser-Ligget C."/>
            <person name="Seshadri R."/>
        </authorList>
    </citation>
    <scope>NUCLEOTIDE SEQUENCE [LARGE SCALE GENOMIC DNA]</scope>
    <source>
        <strain>ATCC 35685 / KC583 / Herrer 020/F12,63</strain>
    </source>
</reference>
<evidence type="ECO:0000255" key="1">
    <source>
        <dbReference type="HAMAP-Rule" id="MF_00101"/>
    </source>
</evidence>
<feature type="chain" id="PRO_1000008387" description="Holo-[acyl-carrier-protein] synthase">
    <location>
        <begin position="1"/>
        <end position="133"/>
    </location>
</feature>
<feature type="binding site" evidence="1">
    <location>
        <position position="8"/>
    </location>
    <ligand>
        <name>Mg(2+)</name>
        <dbReference type="ChEBI" id="CHEBI:18420"/>
    </ligand>
</feature>
<feature type="binding site" evidence="1">
    <location>
        <position position="57"/>
    </location>
    <ligand>
        <name>Mg(2+)</name>
        <dbReference type="ChEBI" id="CHEBI:18420"/>
    </ligand>
</feature>
<comment type="function">
    <text evidence="1">Transfers the 4'-phosphopantetheine moiety from coenzyme A to a Ser of acyl-carrier-protein.</text>
</comment>
<comment type="catalytic activity">
    <reaction evidence="1">
        <text>apo-[ACP] + CoA = holo-[ACP] + adenosine 3',5'-bisphosphate + H(+)</text>
        <dbReference type="Rhea" id="RHEA:12068"/>
        <dbReference type="Rhea" id="RHEA-COMP:9685"/>
        <dbReference type="Rhea" id="RHEA-COMP:9690"/>
        <dbReference type="ChEBI" id="CHEBI:15378"/>
        <dbReference type="ChEBI" id="CHEBI:29999"/>
        <dbReference type="ChEBI" id="CHEBI:57287"/>
        <dbReference type="ChEBI" id="CHEBI:58343"/>
        <dbReference type="ChEBI" id="CHEBI:64479"/>
        <dbReference type="EC" id="2.7.8.7"/>
    </reaction>
</comment>
<comment type="cofactor">
    <cofactor evidence="1">
        <name>Mg(2+)</name>
        <dbReference type="ChEBI" id="CHEBI:18420"/>
    </cofactor>
</comment>
<comment type="subcellular location">
    <subcellularLocation>
        <location evidence="1">Cytoplasm</location>
    </subcellularLocation>
</comment>
<comment type="similarity">
    <text evidence="1">Belongs to the P-Pant transferase superfamily. AcpS family.</text>
</comment>
<gene>
    <name evidence="1" type="primary">acpS</name>
    <name type="ordered locus">BARBAKC583_0471</name>
</gene>
<keyword id="KW-0963">Cytoplasm</keyword>
<keyword id="KW-0275">Fatty acid biosynthesis</keyword>
<keyword id="KW-0276">Fatty acid metabolism</keyword>
<keyword id="KW-0444">Lipid biosynthesis</keyword>
<keyword id="KW-0443">Lipid metabolism</keyword>
<keyword id="KW-0460">Magnesium</keyword>
<keyword id="KW-0479">Metal-binding</keyword>
<keyword id="KW-0808">Transferase</keyword>